<evidence type="ECO:0000250" key="1"/>
<evidence type="ECO:0000250" key="2">
    <source>
        <dbReference type="UniProtKB" id="P0DJ07"/>
    </source>
</evidence>
<evidence type="ECO:0000250" key="3">
    <source>
        <dbReference type="UniProtKB" id="P0DJE0"/>
    </source>
</evidence>
<evidence type="ECO:0000255" key="4"/>
<evidence type="ECO:0000305" key="5"/>
<name>PT100_PIG</name>
<sequence length="76" mass="9405">MGVKLEVFRMTIYLTFPVAMFWIANQAEWFEDYVIQRKRELWPPEKEDQPQELEDFKERIRKQREERLLRAAQQSS</sequence>
<reference key="1">
    <citation type="submission" date="2006-05" db="EMBL/GenBank/DDBJ databases">
        <title>Generation and analysis of cDNA sequences derived from a porcine skeletal muscle library.</title>
        <authorList>
            <person name="Cai G."/>
            <person name="Chen Y."/>
            <person name="Wang C."/>
            <person name="Li J."/>
            <person name="Peng G."/>
            <person name="Zhang H."/>
        </authorList>
    </citation>
    <scope>NUCLEOTIDE SEQUENCE [LARGE SCALE MRNA]</scope>
    <source>
        <tissue>Longissimus dorsi muscle</tissue>
    </source>
</reference>
<dbReference type="EMBL" id="DQ629142">
    <property type="protein sequence ID" value="ABK55627.1"/>
    <property type="molecule type" value="mRNA"/>
</dbReference>
<dbReference type="RefSeq" id="NP_001090935.1">
    <property type="nucleotide sequence ID" value="NM_001097466.2"/>
</dbReference>
<dbReference type="SMR" id="A1XQS1"/>
<dbReference type="FunCoup" id="A1XQS1">
    <property type="interactions" value="73"/>
</dbReference>
<dbReference type="STRING" id="9823.ENSSSCP00000035816"/>
<dbReference type="PaxDb" id="9823-ENSSSCP00000014432"/>
<dbReference type="GeneID" id="100037981"/>
<dbReference type="KEGG" id="ssc:100037981"/>
<dbReference type="CTD" id="100131801"/>
<dbReference type="eggNOG" id="KOG4702">
    <property type="taxonomic scope" value="Eukaryota"/>
</dbReference>
<dbReference type="InParanoid" id="A1XQS1"/>
<dbReference type="OrthoDB" id="18175at2759"/>
<dbReference type="Proteomes" id="UP000008227">
    <property type="component" value="Unplaced"/>
</dbReference>
<dbReference type="Proteomes" id="UP000314985">
    <property type="component" value="Unplaced"/>
</dbReference>
<dbReference type="Proteomes" id="UP000694570">
    <property type="component" value="Unplaced"/>
</dbReference>
<dbReference type="Proteomes" id="UP000694571">
    <property type="component" value="Unplaced"/>
</dbReference>
<dbReference type="Proteomes" id="UP000694720">
    <property type="component" value="Unplaced"/>
</dbReference>
<dbReference type="Proteomes" id="UP000694722">
    <property type="component" value="Unplaced"/>
</dbReference>
<dbReference type="Proteomes" id="UP000694723">
    <property type="component" value="Unplaced"/>
</dbReference>
<dbReference type="Proteomes" id="UP000694724">
    <property type="component" value="Unplaced"/>
</dbReference>
<dbReference type="Proteomes" id="UP000694725">
    <property type="component" value="Unplaced"/>
</dbReference>
<dbReference type="Proteomes" id="UP000694726">
    <property type="component" value="Unplaced"/>
</dbReference>
<dbReference type="Proteomes" id="UP000694727">
    <property type="component" value="Unplaced"/>
</dbReference>
<dbReference type="Proteomes" id="UP000694728">
    <property type="component" value="Unplaced"/>
</dbReference>
<dbReference type="GO" id="GO:0005743">
    <property type="term" value="C:mitochondrial inner membrane"/>
    <property type="evidence" value="ECO:0000318"/>
    <property type="project" value="GO_Central"/>
</dbReference>
<dbReference type="GO" id="GO:0051082">
    <property type="term" value="F:unfolded protein binding"/>
    <property type="evidence" value="ECO:0000318"/>
    <property type="project" value="GO_Central"/>
</dbReference>
<dbReference type="GO" id="GO:0033617">
    <property type="term" value="P:mitochondrial cytochrome c oxidase assembly"/>
    <property type="evidence" value="ECO:0000318"/>
    <property type="project" value="GO_Central"/>
</dbReference>
<dbReference type="InterPro" id="IPR018625">
    <property type="entry name" value="Pet100"/>
</dbReference>
<dbReference type="PANTHER" id="PTHR33968">
    <property type="entry name" value="PROTEIN PET100 HOMOLOG, MITOCHONDRIAL"/>
    <property type="match status" value="1"/>
</dbReference>
<dbReference type="PANTHER" id="PTHR33968:SF1">
    <property type="entry name" value="PROTEIN PET100 HOMOLOG, MITOCHONDRIAL"/>
    <property type="match status" value="1"/>
</dbReference>
<dbReference type="Pfam" id="PF09803">
    <property type="entry name" value="Pet100"/>
    <property type="match status" value="1"/>
</dbReference>
<comment type="function">
    <text evidence="2">Plays a role in mitochondrial complex IV assembly.</text>
</comment>
<comment type="subunit">
    <text evidence="1">Interacts with COX7A2.</text>
</comment>
<comment type="subcellular location">
    <subcellularLocation>
        <location evidence="5">Membrane</location>
        <topology evidence="5">Single-pass membrane protein</topology>
    </subcellularLocation>
    <subcellularLocation>
        <location evidence="3">Mitochondrion</location>
    </subcellularLocation>
    <subcellularLocation>
        <location evidence="2">Mitochondrion inner membrane</location>
    </subcellularLocation>
</comment>
<comment type="similarity">
    <text evidence="5">Belongs to the PET100 family.</text>
</comment>
<feature type="transit peptide" description="Mitochondrion">
    <location>
        <begin position="1"/>
        <end status="unknown"/>
    </location>
</feature>
<feature type="chain" id="PRO_0000413100" description="Protein PET100 homolog, mitochondrial">
    <location>
        <begin status="unknown"/>
        <end position="76"/>
    </location>
</feature>
<feature type="transmembrane region" description="Helical" evidence="4">
    <location>
        <begin position="7"/>
        <end position="24"/>
    </location>
</feature>
<organism>
    <name type="scientific">Sus scrofa</name>
    <name type="common">Pig</name>
    <dbReference type="NCBI Taxonomy" id="9823"/>
    <lineage>
        <taxon>Eukaryota</taxon>
        <taxon>Metazoa</taxon>
        <taxon>Chordata</taxon>
        <taxon>Craniata</taxon>
        <taxon>Vertebrata</taxon>
        <taxon>Euteleostomi</taxon>
        <taxon>Mammalia</taxon>
        <taxon>Eutheria</taxon>
        <taxon>Laurasiatheria</taxon>
        <taxon>Artiodactyla</taxon>
        <taxon>Suina</taxon>
        <taxon>Suidae</taxon>
        <taxon>Sus</taxon>
    </lineage>
</organism>
<gene>
    <name type="primary">PET100</name>
</gene>
<accession>A1XQS1</accession>
<keyword id="KW-0472">Membrane</keyword>
<keyword id="KW-0496">Mitochondrion</keyword>
<keyword id="KW-0999">Mitochondrion inner membrane</keyword>
<keyword id="KW-1185">Reference proteome</keyword>
<keyword id="KW-0809">Transit peptide</keyword>
<keyword id="KW-0812">Transmembrane</keyword>
<keyword id="KW-1133">Transmembrane helix</keyword>
<proteinExistence type="inferred from homology"/>
<protein>
    <recommendedName>
        <fullName>Protein PET100 homolog, mitochondrial</fullName>
    </recommendedName>
</protein>